<gene>
    <name evidence="2" type="primary">ACSF3</name>
</gene>
<protein>
    <recommendedName>
        <fullName evidence="2">Malonate--CoA ligase ACSF3, mitochondrial</fullName>
        <ecNumber evidence="2">6.2.1.76</ecNumber>
    </recommendedName>
    <alternativeName>
        <fullName>Acyl-CoA synthetase family member 3</fullName>
    </alternativeName>
</protein>
<comment type="function">
    <text evidence="2">Catalyzes the initial reaction in intramitochondrial fatty acid synthesis, by activating malonate and methylmalonate, but not acetate, into their respective CoA thioester. May have some preference toward very-long-chain substrates.</text>
</comment>
<comment type="catalytic activity">
    <reaction evidence="2">
        <text>tetracosanoate + ATP + CoA = tetracosanoyl-CoA + AMP + diphosphate</text>
        <dbReference type="Rhea" id="RHEA:33639"/>
        <dbReference type="ChEBI" id="CHEBI:30616"/>
        <dbReference type="ChEBI" id="CHEBI:31014"/>
        <dbReference type="ChEBI" id="CHEBI:33019"/>
        <dbReference type="ChEBI" id="CHEBI:57287"/>
        <dbReference type="ChEBI" id="CHEBI:65052"/>
        <dbReference type="ChEBI" id="CHEBI:456215"/>
    </reaction>
    <physiologicalReaction direction="left-to-right" evidence="2">
        <dbReference type="Rhea" id="RHEA:33640"/>
    </physiologicalReaction>
</comment>
<comment type="catalytic activity">
    <reaction evidence="2">
        <text>malonate + ATP + CoA = malonyl-CoA + AMP + diphosphate</text>
        <dbReference type="Rhea" id="RHEA:32139"/>
        <dbReference type="ChEBI" id="CHEBI:15792"/>
        <dbReference type="ChEBI" id="CHEBI:30616"/>
        <dbReference type="ChEBI" id="CHEBI:33019"/>
        <dbReference type="ChEBI" id="CHEBI:57287"/>
        <dbReference type="ChEBI" id="CHEBI:57384"/>
        <dbReference type="ChEBI" id="CHEBI:456215"/>
        <dbReference type="EC" id="6.2.1.76"/>
    </reaction>
    <physiologicalReaction direction="left-to-right" evidence="2">
        <dbReference type="Rhea" id="RHEA:32140"/>
    </physiologicalReaction>
</comment>
<comment type="subcellular location">
    <subcellularLocation>
        <location evidence="2">Mitochondrion</location>
    </subcellularLocation>
</comment>
<comment type="similarity">
    <text evidence="4">Belongs to the ATP-dependent AMP-binding enzyme family.</text>
</comment>
<name>ACSF3_BOVIN</name>
<organism>
    <name type="scientific">Bos taurus</name>
    <name type="common">Bovine</name>
    <dbReference type="NCBI Taxonomy" id="9913"/>
    <lineage>
        <taxon>Eukaryota</taxon>
        <taxon>Metazoa</taxon>
        <taxon>Chordata</taxon>
        <taxon>Craniata</taxon>
        <taxon>Vertebrata</taxon>
        <taxon>Euteleostomi</taxon>
        <taxon>Mammalia</taxon>
        <taxon>Eutheria</taxon>
        <taxon>Laurasiatheria</taxon>
        <taxon>Artiodactyla</taxon>
        <taxon>Ruminantia</taxon>
        <taxon>Pecora</taxon>
        <taxon>Bovidae</taxon>
        <taxon>Bovinae</taxon>
        <taxon>Bos</taxon>
    </lineage>
</organism>
<sequence>MPLPYVGMALRRLAWAVASCRLAPWTRGASGPLHSAPAARSDCSAPVFIRAPAFGDRLALIDQHGRHTYKDLYLRSLRLSREICQLRACADGDLREERVSLLCSNDVSFVVAQWAAWMSGGVAVPLYRKHPRAQLEYFIQDSRSSVVLAGPEHVELLSPVAQKLGVPLLPLPPTVYHGVAEDPEEGLVLERNWRDRGAMIIYTSGTTGRPKGVLSTHDNIRAVVTGLVHKWAWTKDDVILHVLPLHHVHGVVNKLLCPLWVGATCVMLPEFSAQLVWEKFLSSEAPQINVFMAVPTIYSKLMDYYDKHFTQPHVQDFVRAVCEEKIRLMVSGSAALPLPVLEKWKGITGHTLLERYGMTEIGMALSNPLTAARLPGSVGTPLPGVEVRIVSENPQKDSSPYLIHAEGSEENTKVTPGFEEKEGELLVRGPSVFREYWDKPEETKAAFTSDGWFKTGDTVVFKDGCYWIRGRTSVDIIKSGGYKVSALEVERLLLAHPSITDVAVIGVPDMTWGQRVTAVVTLQEGHSLSHRELKEWARGVLAPYAVPSELLLVEEIPRNQMGKVNKRDLVRQLYPHEKGAPEAGSQ</sequence>
<feature type="transit peptide" description="Mitochondrion" evidence="3">
    <location>
        <begin position="1"/>
        <end position="89"/>
    </location>
</feature>
<feature type="chain" id="PRO_0000315799" description="Malonate--CoA ligase ACSF3, mitochondrial">
    <location>
        <begin position="90"/>
        <end position="586"/>
    </location>
</feature>
<feature type="binding site" evidence="1">
    <location>
        <begin position="203"/>
        <end position="211"/>
    </location>
    <ligand>
        <name>ATP</name>
        <dbReference type="ChEBI" id="CHEBI:30616"/>
    </ligand>
</feature>
<feature type="binding site" evidence="1">
    <location>
        <position position="457"/>
    </location>
    <ligand>
        <name>ATP</name>
        <dbReference type="ChEBI" id="CHEBI:30616"/>
    </ligand>
</feature>
<feature type="binding site" evidence="1">
    <location>
        <position position="471"/>
    </location>
    <ligand>
        <name>ATP</name>
        <dbReference type="ChEBI" id="CHEBI:30616"/>
    </ligand>
</feature>
<feature type="binding site" evidence="1">
    <location>
        <position position="563"/>
    </location>
    <ligand>
        <name>ATP</name>
        <dbReference type="ChEBI" id="CHEBI:30616"/>
    </ligand>
</feature>
<accession>Q58DN7</accession>
<proteinExistence type="evidence at transcript level"/>
<dbReference type="EC" id="6.2.1.76" evidence="2"/>
<dbReference type="EMBL" id="BT021560">
    <property type="protein sequence ID" value="AAX46407.1"/>
    <property type="molecule type" value="mRNA"/>
</dbReference>
<dbReference type="EMBL" id="BC102586">
    <property type="protein sequence ID" value="AAI02587.1"/>
    <property type="molecule type" value="mRNA"/>
</dbReference>
<dbReference type="RefSeq" id="NP_001030240.1">
    <property type="nucleotide sequence ID" value="NM_001035068.2"/>
</dbReference>
<dbReference type="RefSeq" id="XP_005218566.1">
    <property type="nucleotide sequence ID" value="XM_005218509.5"/>
</dbReference>
<dbReference type="SMR" id="Q58DN7"/>
<dbReference type="FunCoup" id="Q58DN7">
    <property type="interactions" value="1840"/>
</dbReference>
<dbReference type="STRING" id="9913.ENSBTAP00000060268"/>
<dbReference type="PaxDb" id="9913-ENSBTAP00000021234"/>
<dbReference type="GeneID" id="509209"/>
<dbReference type="KEGG" id="bta:509209"/>
<dbReference type="CTD" id="197322"/>
<dbReference type="VEuPathDB" id="HostDB:ENSBTAG00000015968"/>
<dbReference type="eggNOG" id="KOG1176">
    <property type="taxonomic scope" value="Eukaryota"/>
</dbReference>
<dbReference type="HOGENOM" id="CLU_000022_59_11_1"/>
<dbReference type="InParanoid" id="Q58DN7"/>
<dbReference type="OrthoDB" id="2962993at2759"/>
<dbReference type="TreeFam" id="TF312995"/>
<dbReference type="Reactome" id="R-BTA-75876">
    <property type="pathway name" value="Synthesis of very long-chain fatty acyl-CoAs"/>
</dbReference>
<dbReference type="Proteomes" id="UP000009136">
    <property type="component" value="Chromosome 18"/>
</dbReference>
<dbReference type="Bgee" id="ENSBTAG00000015968">
    <property type="expression patterns" value="Expressed in cortex of kidney and 105 other cell types or tissues"/>
</dbReference>
<dbReference type="GO" id="GO:0005739">
    <property type="term" value="C:mitochondrion"/>
    <property type="evidence" value="ECO:0000318"/>
    <property type="project" value="GO_Central"/>
</dbReference>
<dbReference type="GO" id="GO:0005524">
    <property type="term" value="F:ATP binding"/>
    <property type="evidence" value="ECO:0007669"/>
    <property type="project" value="UniProtKB-KW"/>
</dbReference>
<dbReference type="GO" id="GO:0016405">
    <property type="term" value="F:CoA-ligase activity"/>
    <property type="evidence" value="ECO:0000318"/>
    <property type="project" value="GO_Central"/>
</dbReference>
<dbReference type="GO" id="GO:0090409">
    <property type="term" value="F:malonyl-CoA synthetase activity"/>
    <property type="evidence" value="ECO:0007669"/>
    <property type="project" value="RHEA"/>
</dbReference>
<dbReference type="GO" id="GO:0006633">
    <property type="term" value="P:fatty acid biosynthetic process"/>
    <property type="evidence" value="ECO:0000318"/>
    <property type="project" value="GO_Central"/>
</dbReference>
<dbReference type="CDD" id="cd05941">
    <property type="entry name" value="MCS"/>
    <property type="match status" value="1"/>
</dbReference>
<dbReference type="FunFam" id="3.30.300.30:FF:000031">
    <property type="entry name" value="Acyl-CoA synthetase family member 3"/>
    <property type="match status" value="1"/>
</dbReference>
<dbReference type="FunFam" id="3.40.50.12780:FF:000030">
    <property type="entry name" value="Acyl-CoA synthetase family member 3"/>
    <property type="match status" value="1"/>
</dbReference>
<dbReference type="Gene3D" id="3.30.300.30">
    <property type="match status" value="1"/>
</dbReference>
<dbReference type="Gene3D" id="3.40.50.12780">
    <property type="entry name" value="N-terminal domain of ligase-like"/>
    <property type="match status" value="1"/>
</dbReference>
<dbReference type="InterPro" id="IPR025110">
    <property type="entry name" value="AMP-bd_C"/>
</dbReference>
<dbReference type="InterPro" id="IPR045851">
    <property type="entry name" value="AMP-bd_C_sf"/>
</dbReference>
<dbReference type="InterPro" id="IPR020845">
    <property type="entry name" value="AMP-binding_CS"/>
</dbReference>
<dbReference type="InterPro" id="IPR000873">
    <property type="entry name" value="AMP-dep_synth/lig_dom"/>
</dbReference>
<dbReference type="InterPro" id="IPR042099">
    <property type="entry name" value="ANL_N_sf"/>
</dbReference>
<dbReference type="PANTHER" id="PTHR43201">
    <property type="entry name" value="ACYL-COA SYNTHETASE"/>
    <property type="match status" value="1"/>
</dbReference>
<dbReference type="PANTHER" id="PTHR43201:SF8">
    <property type="entry name" value="ACYL-COA SYNTHETASE FAMILY MEMBER 3"/>
    <property type="match status" value="1"/>
</dbReference>
<dbReference type="Pfam" id="PF00501">
    <property type="entry name" value="AMP-binding"/>
    <property type="match status" value="1"/>
</dbReference>
<dbReference type="Pfam" id="PF13193">
    <property type="entry name" value="AMP-binding_C"/>
    <property type="match status" value="1"/>
</dbReference>
<dbReference type="SUPFAM" id="SSF56801">
    <property type="entry name" value="Acetyl-CoA synthetase-like"/>
    <property type="match status" value="1"/>
</dbReference>
<dbReference type="PROSITE" id="PS00455">
    <property type="entry name" value="AMP_BINDING"/>
    <property type="match status" value="1"/>
</dbReference>
<reference key="1">
    <citation type="journal article" date="2005" name="BMC Genomics">
        <title>Characterization of 954 bovine full-CDS cDNA sequences.</title>
        <authorList>
            <person name="Harhay G.P."/>
            <person name="Sonstegard T.S."/>
            <person name="Keele J.W."/>
            <person name="Heaton M.P."/>
            <person name="Clawson M.L."/>
            <person name="Snelling W.M."/>
            <person name="Wiedmann R.T."/>
            <person name="Van Tassell C.P."/>
            <person name="Smith T.P.L."/>
        </authorList>
    </citation>
    <scope>NUCLEOTIDE SEQUENCE [LARGE SCALE MRNA]</scope>
</reference>
<reference key="2">
    <citation type="submission" date="2005-08" db="EMBL/GenBank/DDBJ databases">
        <authorList>
            <consortium name="NIH - Mammalian Gene Collection (MGC) project"/>
        </authorList>
    </citation>
    <scope>NUCLEOTIDE SEQUENCE [LARGE SCALE MRNA]</scope>
    <source>
        <strain>Crossbred X Angus</strain>
        <tissue>Ileum</tissue>
    </source>
</reference>
<keyword id="KW-0067">ATP-binding</keyword>
<keyword id="KW-0276">Fatty acid metabolism</keyword>
<keyword id="KW-0436">Ligase</keyword>
<keyword id="KW-0443">Lipid metabolism</keyword>
<keyword id="KW-0496">Mitochondrion</keyword>
<keyword id="KW-0547">Nucleotide-binding</keyword>
<keyword id="KW-1185">Reference proteome</keyword>
<keyword id="KW-0809">Transit peptide</keyword>
<evidence type="ECO:0000250" key="1"/>
<evidence type="ECO:0000250" key="2">
    <source>
        <dbReference type="UniProtKB" id="Q4G176"/>
    </source>
</evidence>
<evidence type="ECO:0000255" key="3"/>
<evidence type="ECO:0000305" key="4"/>